<feature type="chain" id="PRO_1000021828" description="Homoserine O-acetyltransferase">
    <location>
        <begin position="1"/>
        <end position="305"/>
    </location>
</feature>
<feature type="active site" description="Acyl-thioester intermediate" evidence="1">
    <location>
        <position position="142"/>
    </location>
</feature>
<feature type="active site" description="Proton acceptor" evidence="1">
    <location>
        <position position="235"/>
    </location>
</feature>
<feature type="active site" evidence="1">
    <location>
        <position position="237"/>
    </location>
</feature>
<feature type="binding site" evidence="1">
    <location>
        <position position="163"/>
    </location>
    <ligand>
        <name>substrate</name>
    </ligand>
</feature>
<feature type="binding site" evidence="1">
    <location>
        <position position="192"/>
    </location>
    <ligand>
        <name>substrate</name>
    </ligand>
</feature>
<feature type="binding site" evidence="1">
    <location>
        <position position="249"/>
    </location>
    <ligand>
        <name>substrate</name>
    </ligand>
</feature>
<feature type="site" description="Important for acyl-CoA specificity" evidence="1">
    <location>
        <position position="111"/>
    </location>
</feature>
<feature type="site" description="Important for substrate specificity" evidence="1">
    <location>
        <position position="192"/>
    </location>
</feature>
<name>METAA_CERS5</name>
<proteinExistence type="inferred from homology"/>
<reference key="1">
    <citation type="submission" date="2007-04" db="EMBL/GenBank/DDBJ databases">
        <title>Complete sequence of chromosome of Rhodobacter sphaeroides ATCC 17025.</title>
        <authorList>
            <consortium name="US DOE Joint Genome Institute"/>
            <person name="Copeland A."/>
            <person name="Lucas S."/>
            <person name="Lapidus A."/>
            <person name="Barry K."/>
            <person name="Detter J.C."/>
            <person name="Glavina del Rio T."/>
            <person name="Hammon N."/>
            <person name="Israni S."/>
            <person name="Dalin E."/>
            <person name="Tice H."/>
            <person name="Pitluck S."/>
            <person name="Chertkov O."/>
            <person name="Brettin T."/>
            <person name="Bruce D."/>
            <person name="Han C."/>
            <person name="Schmutz J."/>
            <person name="Larimer F."/>
            <person name="Land M."/>
            <person name="Hauser L."/>
            <person name="Kyrpides N."/>
            <person name="Kim E."/>
            <person name="Richardson P."/>
            <person name="Mackenzie C."/>
            <person name="Choudhary M."/>
            <person name="Donohue T.J."/>
            <person name="Kaplan S."/>
        </authorList>
    </citation>
    <scope>NUCLEOTIDE SEQUENCE [LARGE SCALE GENOMIC DNA]</scope>
    <source>
        <strain>ATCC 17025 / ATH 2.4.3</strain>
    </source>
</reference>
<dbReference type="EC" id="2.3.1.31" evidence="1"/>
<dbReference type="EMBL" id="CP000661">
    <property type="protein sequence ID" value="ABP71056.1"/>
    <property type="molecule type" value="Genomic_DNA"/>
</dbReference>
<dbReference type="SMR" id="A4WUJ2"/>
<dbReference type="STRING" id="349102.Rsph17025_2166"/>
<dbReference type="KEGG" id="rsq:Rsph17025_2166"/>
<dbReference type="eggNOG" id="COG1897">
    <property type="taxonomic scope" value="Bacteria"/>
</dbReference>
<dbReference type="HOGENOM" id="CLU_057851_0_1_5"/>
<dbReference type="BioCyc" id="RSPH349102:G1G8M-2235-MONOMER"/>
<dbReference type="UniPathway" id="UPA00051">
    <property type="reaction ID" value="UER00074"/>
</dbReference>
<dbReference type="GO" id="GO:0005737">
    <property type="term" value="C:cytoplasm"/>
    <property type="evidence" value="ECO:0007669"/>
    <property type="project" value="UniProtKB-SubCell"/>
</dbReference>
<dbReference type="GO" id="GO:0004414">
    <property type="term" value="F:homoserine O-acetyltransferase activity"/>
    <property type="evidence" value="ECO:0007669"/>
    <property type="project" value="UniProtKB-EC"/>
</dbReference>
<dbReference type="GO" id="GO:0008899">
    <property type="term" value="F:homoserine O-succinyltransferase activity"/>
    <property type="evidence" value="ECO:0007669"/>
    <property type="project" value="UniProtKB-UniRule"/>
</dbReference>
<dbReference type="GO" id="GO:0019281">
    <property type="term" value="P:L-methionine biosynthetic process from homoserine via O-succinyl-L-homoserine and cystathionine"/>
    <property type="evidence" value="ECO:0007669"/>
    <property type="project" value="InterPro"/>
</dbReference>
<dbReference type="CDD" id="cd03131">
    <property type="entry name" value="GATase1_HTS"/>
    <property type="match status" value="1"/>
</dbReference>
<dbReference type="Gene3D" id="3.40.50.880">
    <property type="match status" value="1"/>
</dbReference>
<dbReference type="HAMAP" id="MF_00295">
    <property type="entry name" value="MetA_acyltransf"/>
    <property type="match status" value="1"/>
</dbReference>
<dbReference type="InterPro" id="IPR029062">
    <property type="entry name" value="Class_I_gatase-like"/>
</dbReference>
<dbReference type="InterPro" id="IPR005697">
    <property type="entry name" value="HST_MetA"/>
</dbReference>
<dbReference type="InterPro" id="IPR033752">
    <property type="entry name" value="MetA_family"/>
</dbReference>
<dbReference type="NCBIfam" id="TIGR01001">
    <property type="entry name" value="metA"/>
    <property type="match status" value="1"/>
</dbReference>
<dbReference type="PANTHER" id="PTHR20919">
    <property type="entry name" value="HOMOSERINE O-SUCCINYLTRANSFERASE"/>
    <property type="match status" value="1"/>
</dbReference>
<dbReference type="PANTHER" id="PTHR20919:SF0">
    <property type="entry name" value="HOMOSERINE O-SUCCINYLTRANSFERASE"/>
    <property type="match status" value="1"/>
</dbReference>
<dbReference type="Pfam" id="PF04204">
    <property type="entry name" value="HTS"/>
    <property type="match status" value="1"/>
</dbReference>
<dbReference type="PIRSF" id="PIRSF000450">
    <property type="entry name" value="H_ser_succinyltr"/>
    <property type="match status" value="1"/>
</dbReference>
<dbReference type="SUPFAM" id="SSF52317">
    <property type="entry name" value="Class I glutamine amidotransferase-like"/>
    <property type="match status" value="1"/>
</dbReference>
<accession>A4WUJ2</accession>
<organism>
    <name type="scientific">Cereibacter sphaeroides (strain ATCC 17025 / ATH 2.4.3)</name>
    <name type="common">Rhodobacter sphaeroides</name>
    <dbReference type="NCBI Taxonomy" id="349102"/>
    <lineage>
        <taxon>Bacteria</taxon>
        <taxon>Pseudomonadati</taxon>
        <taxon>Pseudomonadota</taxon>
        <taxon>Alphaproteobacteria</taxon>
        <taxon>Rhodobacterales</taxon>
        <taxon>Paracoccaceae</taxon>
        <taxon>Cereibacter</taxon>
    </lineage>
</organism>
<evidence type="ECO:0000255" key="1">
    <source>
        <dbReference type="HAMAP-Rule" id="MF_00295"/>
    </source>
</evidence>
<protein>
    <recommendedName>
        <fullName evidence="1">Homoserine O-acetyltransferase</fullName>
        <shortName evidence="1">HAT</shortName>
        <ecNumber evidence="1">2.3.1.31</ecNumber>
    </recommendedName>
    <alternativeName>
        <fullName evidence="1">Homoserine transacetylase</fullName>
        <shortName evidence="1">HTA</shortName>
    </alternativeName>
</protein>
<keyword id="KW-0012">Acyltransferase</keyword>
<keyword id="KW-0028">Amino-acid biosynthesis</keyword>
<keyword id="KW-0963">Cytoplasm</keyword>
<keyword id="KW-0486">Methionine biosynthesis</keyword>
<keyword id="KW-0808">Transferase</keyword>
<gene>
    <name evidence="1" type="primary">metAA</name>
    <name type="ordered locus">Rsph17025_2166</name>
</gene>
<sequence>MPITLPATLPAFDVLTHEGVMVMTPERAARQDIRPLRIGLLNLMPKKIQTENQFARLIGATPLQIDFQLIRMTEHQTKNTAAEHMAAFYRPFQEVKHEKFDGLIITGAPIEHLDFSEVTYWDELCEVMDWTQTHVHSTFGVCWGGMAMIYHFHGVPKHMLAAKAFGCFRHRNVAPVSPYLRGFSDDFVIPVSRWTEMRQDEIDAAPGLRTLLASDEVGPCLVEDAGHRALYIFNHFEYDSDTLKQEYDRDIGNGKPINVPRNYYPDDDPTKPPLNRWRSHAHLLYGNWINEIYQSTPYDIQQIGR</sequence>
<comment type="function">
    <text evidence="1">Transfers an acetyl group from acetyl-CoA to L-homoserine, forming acetyl-L-homoserine.</text>
</comment>
<comment type="catalytic activity">
    <reaction evidence="1">
        <text>L-homoserine + acetyl-CoA = O-acetyl-L-homoserine + CoA</text>
        <dbReference type="Rhea" id="RHEA:13701"/>
        <dbReference type="ChEBI" id="CHEBI:57287"/>
        <dbReference type="ChEBI" id="CHEBI:57288"/>
        <dbReference type="ChEBI" id="CHEBI:57476"/>
        <dbReference type="ChEBI" id="CHEBI:57716"/>
        <dbReference type="EC" id="2.3.1.31"/>
    </reaction>
</comment>
<comment type="pathway">
    <text evidence="1">Amino-acid biosynthesis; L-methionine biosynthesis via de novo pathway; O-acetyl-L-homoserine from L-homoserine: step 1/1.</text>
</comment>
<comment type="subcellular location">
    <subcellularLocation>
        <location evidence="1">Cytoplasm</location>
    </subcellularLocation>
</comment>
<comment type="similarity">
    <text evidence="1">Belongs to the MetA family.</text>
</comment>